<evidence type="ECO:0000250" key="1"/>
<evidence type="ECO:0000255" key="2">
    <source>
        <dbReference type="PROSITE-ProRule" id="PRU00490"/>
    </source>
</evidence>
<evidence type="ECO:0000305" key="3"/>
<reference key="1">
    <citation type="journal article" date="2008" name="PLoS Genet.">
        <title>Genomic islands in the pathogenic filamentous fungus Aspergillus fumigatus.</title>
        <authorList>
            <person name="Fedorova N.D."/>
            <person name="Khaldi N."/>
            <person name="Joardar V.S."/>
            <person name="Maiti R."/>
            <person name="Amedeo P."/>
            <person name="Anderson M.J."/>
            <person name="Crabtree J."/>
            <person name="Silva J.C."/>
            <person name="Badger J.H."/>
            <person name="Albarraq A."/>
            <person name="Angiuoli S."/>
            <person name="Bussey H."/>
            <person name="Bowyer P."/>
            <person name="Cotty P.J."/>
            <person name="Dyer P.S."/>
            <person name="Egan A."/>
            <person name="Galens K."/>
            <person name="Fraser-Liggett C.M."/>
            <person name="Haas B.J."/>
            <person name="Inman J.M."/>
            <person name="Kent R."/>
            <person name="Lemieux S."/>
            <person name="Malavazi I."/>
            <person name="Orvis J."/>
            <person name="Roemer T."/>
            <person name="Ronning C.M."/>
            <person name="Sundaram J.P."/>
            <person name="Sutton G."/>
            <person name="Turner G."/>
            <person name="Venter J.C."/>
            <person name="White O.R."/>
            <person name="Whitty B.R."/>
            <person name="Youngman P."/>
            <person name="Wolfe K.H."/>
            <person name="Goldman G.H."/>
            <person name="Wortman J.R."/>
            <person name="Jiang B."/>
            <person name="Denning D.W."/>
            <person name="Nierman W.C."/>
        </authorList>
    </citation>
    <scope>NUCLEOTIDE SEQUENCE [LARGE SCALE GENOMIC DNA]</scope>
    <source>
        <strain>ATCC 1020 / DSM 3700 / CBS 544.65 / FGSC A1164 / JCM 1740 / NRRL 181 / WB 181</strain>
    </source>
</reference>
<protein>
    <recommendedName>
        <fullName>ADP-ribose 1''-phosphate phosphatase</fullName>
        <ecNumber>3.1.3.84</ecNumber>
    </recommendedName>
</protein>
<gene>
    <name type="primary">poa1</name>
    <name type="ORF">NFIA_008880</name>
</gene>
<accession>A1D1B7</accession>
<sequence length="200" mass="21975">MDLPSVQSKITEIEGDLFHAPDGAALIHACNCQGSWGKGIAKAFKDKYPAAFAIYRSHCQNLLSSPRYRFEPAVQSEESHARSSRGVQLPEGTALIIPPQKRDSEANGKKHWIICLFTSRGFGRAVSPPDVIVRNTELAVADMTRQLAELQAGQSSEEESVEELWSCRFNAGLFGVPWERSRTVLEDAGLEVTVVRPHGG</sequence>
<organism>
    <name type="scientific">Neosartorya fischeri (strain ATCC 1020 / DSM 3700 / CBS 544.65 / FGSC A1164 / JCM 1740 / NRRL 181 / WB 181)</name>
    <name type="common">Aspergillus fischerianus</name>
    <dbReference type="NCBI Taxonomy" id="331117"/>
    <lineage>
        <taxon>Eukaryota</taxon>
        <taxon>Fungi</taxon>
        <taxon>Dikarya</taxon>
        <taxon>Ascomycota</taxon>
        <taxon>Pezizomycotina</taxon>
        <taxon>Eurotiomycetes</taxon>
        <taxon>Eurotiomycetidae</taxon>
        <taxon>Eurotiales</taxon>
        <taxon>Aspergillaceae</taxon>
        <taxon>Aspergillus</taxon>
        <taxon>Aspergillus subgen. Fumigati</taxon>
    </lineage>
</organism>
<comment type="function">
    <text evidence="1">Highly specific phosphatase involved in the metabolism of ADP-ribose 1''-phosphate (Appr1p) which is produced as a consequence of tRNA splicing.</text>
</comment>
<comment type="catalytic activity">
    <reaction>
        <text>ADP-alpha-D-ribose 1''-phosphate + H2O = ADP-D-ribose + phosphate</text>
        <dbReference type="Rhea" id="RHEA:25029"/>
        <dbReference type="ChEBI" id="CHEBI:15377"/>
        <dbReference type="ChEBI" id="CHEBI:43474"/>
        <dbReference type="ChEBI" id="CHEBI:57967"/>
        <dbReference type="ChEBI" id="CHEBI:58753"/>
        <dbReference type="EC" id="3.1.3.84"/>
    </reaction>
</comment>
<comment type="similarity">
    <text evidence="3">Belongs to the POA1 family.</text>
</comment>
<feature type="chain" id="PRO_0000324909" description="ADP-ribose 1''-phosphate phosphatase">
    <location>
        <begin position="1"/>
        <end position="200"/>
    </location>
</feature>
<feature type="domain" description="Macro" evidence="2">
    <location>
        <begin position="1"/>
        <end position="200"/>
    </location>
</feature>
<feature type="binding site" evidence="1">
    <location>
        <begin position="15"/>
        <end position="17"/>
    </location>
    <ligand>
        <name>substrate</name>
    </ligand>
</feature>
<feature type="binding site" evidence="1">
    <location>
        <begin position="29"/>
        <end position="31"/>
    </location>
    <ligand>
        <name>substrate</name>
    </ligand>
</feature>
<feature type="binding site" evidence="1">
    <location>
        <begin position="36"/>
        <end position="41"/>
    </location>
    <ligand>
        <name>substrate</name>
    </ligand>
</feature>
<feature type="binding site" evidence="1">
    <location>
        <begin position="169"/>
        <end position="175"/>
    </location>
    <ligand>
        <name>substrate</name>
    </ligand>
</feature>
<name>POA1_NEOFI</name>
<proteinExistence type="inferred from homology"/>
<keyword id="KW-0378">Hydrolase</keyword>
<keyword id="KW-0904">Protein phosphatase</keyword>
<keyword id="KW-1185">Reference proteome</keyword>
<dbReference type="EC" id="3.1.3.84"/>
<dbReference type="EMBL" id="DS027688">
    <property type="protein sequence ID" value="EAW22210.1"/>
    <property type="molecule type" value="Genomic_DNA"/>
</dbReference>
<dbReference type="RefSeq" id="XP_001264107.1">
    <property type="nucleotide sequence ID" value="XM_001264106.1"/>
</dbReference>
<dbReference type="SMR" id="A1D1B7"/>
<dbReference type="STRING" id="331117.A1D1B7"/>
<dbReference type="EnsemblFungi" id="EAW22210">
    <property type="protein sequence ID" value="EAW22210"/>
    <property type="gene ID" value="NFIA_008880"/>
</dbReference>
<dbReference type="GeneID" id="4591214"/>
<dbReference type="KEGG" id="nfi:NFIA_008880"/>
<dbReference type="VEuPathDB" id="FungiDB:NFIA_008880"/>
<dbReference type="eggNOG" id="ENOG502S60W">
    <property type="taxonomic scope" value="Eukaryota"/>
</dbReference>
<dbReference type="HOGENOM" id="CLU_054419_1_0_1"/>
<dbReference type="OMA" id="CQGSWGK"/>
<dbReference type="OrthoDB" id="2155246at2759"/>
<dbReference type="Proteomes" id="UP000006702">
    <property type="component" value="Unassembled WGS sequence"/>
</dbReference>
<dbReference type="GO" id="GO:0004721">
    <property type="term" value="F:phosphoprotein phosphatase activity"/>
    <property type="evidence" value="ECO:0007669"/>
    <property type="project" value="UniProtKB-KW"/>
</dbReference>
<dbReference type="GO" id="GO:0140291">
    <property type="term" value="P:peptidyl-glutamate ADP-deribosylation"/>
    <property type="evidence" value="ECO:0007669"/>
    <property type="project" value="TreeGrafter"/>
</dbReference>
<dbReference type="CDD" id="cd02901">
    <property type="entry name" value="Macro_Poa1p-like"/>
    <property type="match status" value="1"/>
</dbReference>
<dbReference type="Gene3D" id="3.40.220.10">
    <property type="entry name" value="Leucine Aminopeptidase, subunit E, domain 1"/>
    <property type="match status" value="1"/>
</dbReference>
<dbReference type="InterPro" id="IPR050892">
    <property type="entry name" value="ADP-ribose_metab_enzymes"/>
</dbReference>
<dbReference type="InterPro" id="IPR002589">
    <property type="entry name" value="Macro_dom"/>
</dbReference>
<dbReference type="InterPro" id="IPR043472">
    <property type="entry name" value="Macro_dom-like"/>
</dbReference>
<dbReference type="PANTHER" id="PTHR12521:SF0">
    <property type="entry name" value="ADP-RIBOSE GLYCOHYDROLASE OARD1"/>
    <property type="match status" value="1"/>
</dbReference>
<dbReference type="PANTHER" id="PTHR12521">
    <property type="entry name" value="PROTEIN C6ORF130"/>
    <property type="match status" value="1"/>
</dbReference>
<dbReference type="SMART" id="SM00506">
    <property type="entry name" value="A1pp"/>
    <property type="match status" value="1"/>
</dbReference>
<dbReference type="SUPFAM" id="SSF52949">
    <property type="entry name" value="Macro domain-like"/>
    <property type="match status" value="1"/>
</dbReference>
<dbReference type="PROSITE" id="PS51154">
    <property type="entry name" value="MACRO"/>
    <property type="match status" value="1"/>
</dbReference>